<sequence length="215" mass="24115">MSKVYDWFEERLEIQSIADDITSKYVPPHVNIFYCLGGITFTCFLVQVATGFAMTFYYRPTVAEAFASVQYIMTEVNFGWLIRSIHRWSASMMVLMMILHVFRVYLTGGFKKPRESTWISGVIMAVCTVSFGVTGYSLPWDQIGYWAVKIVTGVPEAIPVVGGPLVELLRGGVGVGQATLTRFYSLHTFVLPLLTAVFMLAHFLMIRKQGISGPL</sequence>
<accession>Q1KVT2</accession>
<protein>
    <recommendedName>
        <fullName evidence="1">Cytochrome b6</fullName>
    </recommendedName>
</protein>
<name>CYB6_TETOB</name>
<reference key="1">
    <citation type="journal article" date="2006" name="BMC Evol. Biol.">
        <title>The complete chloroplast genome sequence of the chlorophycean green alga Scenedesmus obliquus reveals a compact gene organization and a biased distribution of genes on the two DNA strands.</title>
        <authorList>
            <person name="de Cambiaire J.-C."/>
            <person name="Otis C."/>
            <person name="Lemieux C."/>
            <person name="Turmel M."/>
        </authorList>
    </citation>
    <scope>NUCLEOTIDE SEQUENCE [LARGE SCALE GENOMIC DNA]</scope>
    <source>
        <strain>UTEX 393</strain>
    </source>
</reference>
<dbReference type="EMBL" id="DQ396875">
    <property type="protein sequence ID" value="ABD48275.1"/>
    <property type="molecule type" value="Genomic_DNA"/>
</dbReference>
<dbReference type="RefSeq" id="YP_635992.1">
    <property type="nucleotide sequence ID" value="NC_008101.1"/>
</dbReference>
<dbReference type="SMR" id="Q1KVT2"/>
<dbReference type="GeneID" id="4099781"/>
<dbReference type="GO" id="GO:0009535">
    <property type="term" value="C:chloroplast thylakoid membrane"/>
    <property type="evidence" value="ECO:0007669"/>
    <property type="project" value="UniProtKB-SubCell"/>
</dbReference>
<dbReference type="GO" id="GO:0045158">
    <property type="term" value="F:electron transporter, transferring electrons within cytochrome b6/f complex of photosystem II activity"/>
    <property type="evidence" value="ECO:0007669"/>
    <property type="project" value="UniProtKB-UniRule"/>
</dbReference>
<dbReference type="GO" id="GO:0046872">
    <property type="term" value="F:metal ion binding"/>
    <property type="evidence" value="ECO:0007669"/>
    <property type="project" value="UniProtKB-KW"/>
</dbReference>
<dbReference type="GO" id="GO:0016491">
    <property type="term" value="F:oxidoreductase activity"/>
    <property type="evidence" value="ECO:0007669"/>
    <property type="project" value="InterPro"/>
</dbReference>
<dbReference type="GO" id="GO:0015979">
    <property type="term" value="P:photosynthesis"/>
    <property type="evidence" value="ECO:0007669"/>
    <property type="project" value="UniProtKB-UniRule"/>
</dbReference>
<dbReference type="GO" id="GO:0022904">
    <property type="term" value="P:respiratory electron transport chain"/>
    <property type="evidence" value="ECO:0007669"/>
    <property type="project" value="InterPro"/>
</dbReference>
<dbReference type="CDD" id="cd00284">
    <property type="entry name" value="Cytochrome_b_N"/>
    <property type="match status" value="1"/>
</dbReference>
<dbReference type="FunFam" id="1.20.810.10:FF:000001">
    <property type="entry name" value="Cytochrome b6"/>
    <property type="match status" value="1"/>
</dbReference>
<dbReference type="Gene3D" id="1.20.810.10">
    <property type="entry name" value="Cytochrome Bc1 Complex, Chain C"/>
    <property type="match status" value="1"/>
</dbReference>
<dbReference type="HAMAP" id="MF_00633">
    <property type="entry name" value="Cytb6_f_cytb6"/>
    <property type="match status" value="1"/>
</dbReference>
<dbReference type="InterPro" id="IPR005797">
    <property type="entry name" value="Cyt_b/b6_N"/>
</dbReference>
<dbReference type="InterPro" id="IPR023530">
    <property type="entry name" value="Cyt_B6_PetB"/>
</dbReference>
<dbReference type="InterPro" id="IPR027387">
    <property type="entry name" value="Cytb/b6-like_sf"/>
</dbReference>
<dbReference type="InterPro" id="IPR048259">
    <property type="entry name" value="Cytochrome_b_N_euk/bac"/>
</dbReference>
<dbReference type="InterPro" id="IPR016174">
    <property type="entry name" value="Di-haem_cyt_TM"/>
</dbReference>
<dbReference type="NCBIfam" id="NF002990">
    <property type="entry name" value="PRK03735.1"/>
    <property type="match status" value="1"/>
</dbReference>
<dbReference type="PANTHER" id="PTHR19271">
    <property type="entry name" value="CYTOCHROME B"/>
    <property type="match status" value="1"/>
</dbReference>
<dbReference type="PANTHER" id="PTHR19271:SF16">
    <property type="entry name" value="CYTOCHROME B"/>
    <property type="match status" value="1"/>
</dbReference>
<dbReference type="Pfam" id="PF00033">
    <property type="entry name" value="Cytochrome_B"/>
    <property type="match status" value="1"/>
</dbReference>
<dbReference type="PIRSF" id="PIRSF000032">
    <property type="entry name" value="Cytochrome_b6"/>
    <property type="match status" value="1"/>
</dbReference>
<dbReference type="SUPFAM" id="SSF81342">
    <property type="entry name" value="Transmembrane di-heme cytochromes"/>
    <property type="match status" value="1"/>
</dbReference>
<dbReference type="PROSITE" id="PS51002">
    <property type="entry name" value="CYTB_NTER"/>
    <property type="match status" value="1"/>
</dbReference>
<proteinExistence type="inferred from homology"/>
<keyword id="KW-0150">Chloroplast</keyword>
<keyword id="KW-0249">Electron transport</keyword>
<keyword id="KW-0349">Heme</keyword>
<keyword id="KW-0408">Iron</keyword>
<keyword id="KW-0472">Membrane</keyword>
<keyword id="KW-0479">Metal-binding</keyword>
<keyword id="KW-0602">Photosynthesis</keyword>
<keyword id="KW-0934">Plastid</keyword>
<keyword id="KW-0793">Thylakoid</keyword>
<keyword id="KW-0812">Transmembrane</keyword>
<keyword id="KW-1133">Transmembrane helix</keyword>
<keyword id="KW-0813">Transport</keyword>
<comment type="function">
    <text evidence="1">Component of the cytochrome b6-f complex, which mediates electron transfer between photosystem II (PSII) and photosystem I (PSI), cyclic electron flow around PSI, and state transitions.</text>
</comment>
<comment type="cofactor">
    <cofactor evidence="1">
        <name>heme b</name>
        <dbReference type="ChEBI" id="CHEBI:60344"/>
    </cofactor>
    <text evidence="1">Binds 2 heme b groups non-covalently with two histidine residues as axial ligands.</text>
</comment>
<comment type="cofactor">
    <cofactor evidence="1">
        <name>heme c</name>
        <dbReference type="ChEBI" id="CHEBI:61717"/>
    </cofactor>
    <text evidence="1">Binds one heme group covalently by a single cysteine link with no axial amino acid ligand. This heme was named heme ci.</text>
</comment>
<comment type="subunit">
    <text evidence="1">The 4 large subunits of the cytochrome b6-f complex are cytochrome b6, subunit IV (17 kDa polypeptide, PetD), cytochrome f and the Rieske protein, while the 4 small subunits are PetG, PetL, PetM and PetN. The complex functions as a dimer.</text>
</comment>
<comment type="subcellular location">
    <subcellularLocation>
        <location evidence="1">Plastid</location>
        <location evidence="1">Chloroplast thylakoid membrane</location>
        <topology evidence="1">Multi-pass membrane protein</topology>
    </subcellularLocation>
</comment>
<comment type="miscellaneous">
    <text evidence="1">Heme 1 (or BH or b566) is high-potential and absorbs at about 566 nm, and heme 2 (or BL or b562) is low-potential and absorbs at about 562 nm.</text>
</comment>
<comment type="similarity">
    <text evidence="1">Belongs to the cytochrome b family. PetB subfamily.</text>
</comment>
<feature type="chain" id="PRO_0000275333" description="Cytochrome b6">
    <location>
        <begin position="1"/>
        <end position="215"/>
    </location>
</feature>
<feature type="transmembrane region" description="Helical" evidence="1">
    <location>
        <begin position="32"/>
        <end position="52"/>
    </location>
</feature>
<feature type="transmembrane region" description="Helical" evidence="1">
    <location>
        <begin position="90"/>
        <end position="110"/>
    </location>
</feature>
<feature type="transmembrane region" description="Helical" evidence="1">
    <location>
        <begin position="116"/>
        <end position="136"/>
    </location>
</feature>
<feature type="transmembrane region" description="Helical" evidence="1">
    <location>
        <begin position="186"/>
        <end position="206"/>
    </location>
</feature>
<feature type="binding site" description="covalent" evidence="1">
    <location>
        <position position="35"/>
    </location>
    <ligand>
        <name>heme c</name>
        <dbReference type="ChEBI" id="CHEBI:61717"/>
    </ligand>
</feature>
<feature type="binding site" description="axial binding residue" evidence="1">
    <location>
        <position position="86"/>
    </location>
    <ligand>
        <name>heme b</name>
        <dbReference type="ChEBI" id="CHEBI:60344"/>
        <label>2</label>
    </ligand>
    <ligandPart>
        <name>Fe</name>
        <dbReference type="ChEBI" id="CHEBI:18248"/>
    </ligandPart>
</feature>
<feature type="binding site" description="axial binding residue" evidence="1">
    <location>
        <position position="100"/>
    </location>
    <ligand>
        <name>heme b</name>
        <dbReference type="ChEBI" id="CHEBI:60344"/>
        <label>1</label>
    </ligand>
    <ligandPart>
        <name>Fe</name>
        <dbReference type="ChEBI" id="CHEBI:18248"/>
    </ligandPart>
</feature>
<feature type="binding site" description="axial binding residue" evidence="1">
    <location>
        <position position="187"/>
    </location>
    <ligand>
        <name>heme b</name>
        <dbReference type="ChEBI" id="CHEBI:60344"/>
        <label>2</label>
    </ligand>
    <ligandPart>
        <name>Fe</name>
        <dbReference type="ChEBI" id="CHEBI:18248"/>
    </ligandPart>
</feature>
<feature type="binding site" description="axial binding residue" evidence="1">
    <location>
        <position position="202"/>
    </location>
    <ligand>
        <name>heme b</name>
        <dbReference type="ChEBI" id="CHEBI:60344"/>
        <label>1</label>
    </ligand>
    <ligandPart>
        <name>Fe</name>
        <dbReference type="ChEBI" id="CHEBI:18248"/>
    </ligandPart>
</feature>
<gene>
    <name evidence="1" type="primary">petB</name>
</gene>
<evidence type="ECO:0000255" key="1">
    <source>
        <dbReference type="HAMAP-Rule" id="MF_00633"/>
    </source>
</evidence>
<organism>
    <name type="scientific">Tetradesmus obliquus</name>
    <name type="common">Green alga</name>
    <name type="synonym">Acutodesmus obliquus</name>
    <dbReference type="NCBI Taxonomy" id="3088"/>
    <lineage>
        <taxon>Eukaryota</taxon>
        <taxon>Viridiplantae</taxon>
        <taxon>Chlorophyta</taxon>
        <taxon>core chlorophytes</taxon>
        <taxon>Chlorophyceae</taxon>
        <taxon>CS clade</taxon>
        <taxon>Sphaeropleales</taxon>
        <taxon>Scenedesmaceae</taxon>
        <taxon>Tetradesmus</taxon>
    </lineage>
</organism>
<geneLocation type="chloroplast"/>